<name>RL5_STRU0</name>
<proteinExistence type="inferred from homology"/>
<dbReference type="EMBL" id="AM946015">
    <property type="protein sequence ID" value="CAR40458.1"/>
    <property type="molecule type" value="Genomic_DNA"/>
</dbReference>
<dbReference type="RefSeq" id="WP_012657642.1">
    <property type="nucleotide sequence ID" value="NC_012004.1"/>
</dbReference>
<dbReference type="SMR" id="B9DSW2"/>
<dbReference type="STRING" id="218495.SUB0080"/>
<dbReference type="GeneID" id="93825306"/>
<dbReference type="KEGG" id="sub:SUB0080"/>
<dbReference type="eggNOG" id="COG0094">
    <property type="taxonomic scope" value="Bacteria"/>
</dbReference>
<dbReference type="HOGENOM" id="CLU_061015_2_1_9"/>
<dbReference type="OrthoDB" id="9806626at2"/>
<dbReference type="Proteomes" id="UP000000449">
    <property type="component" value="Chromosome"/>
</dbReference>
<dbReference type="GO" id="GO:1990904">
    <property type="term" value="C:ribonucleoprotein complex"/>
    <property type="evidence" value="ECO:0007669"/>
    <property type="project" value="UniProtKB-KW"/>
</dbReference>
<dbReference type="GO" id="GO:0005840">
    <property type="term" value="C:ribosome"/>
    <property type="evidence" value="ECO:0007669"/>
    <property type="project" value="UniProtKB-KW"/>
</dbReference>
<dbReference type="GO" id="GO:0019843">
    <property type="term" value="F:rRNA binding"/>
    <property type="evidence" value="ECO:0007669"/>
    <property type="project" value="UniProtKB-UniRule"/>
</dbReference>
<dbReference type="GO" id="GO:0003735">
    <property type="term" value="F:structural constituent of ribosome"/>
    <property type="evidence" value="ECO:0007669"/>
    <property type="project" value="InterPro"/>
</dbReference>
<dbReference type="GO" id="GO:0000049">
    <property type="term" value="F:tRNA binding"/>
    <property type="evidence" value="ECO:0007669"/>
    <property type="project" value="UniProtKB-UniRule"/>
</dbReference>
<dbReference type="GO" id="GO:0006412">
    <property type="term" value="P:translation"/>
    <property type="evidence" value="ECO:0007669"/>
    <property type="project" value="UniProtKB-UniRule"/>
</dbReference>
<dbReference type="FunFam" id="3.30.1440.10:FF:000001">
    <property type="entry name" value="50S ribosomal protein L5"/>
    <property type="match status" value="1"/>
</dbReference>
<dbReference type="Gene3D" id="3.30.1440.10">
    <property type="match status" value="1"/>
</dbReference>
<dbReference type="HAMAP" id="MF_01333_B">
    <property type="entry name" value="Ribosomal_uL5_B"/>
    <property type="match status" value="1"/>
</dbReference>
<dbReference type="InterPro" id="IPR002132">
    <property type="entry name" value="Ribosomal_uL5"/>
</dbReference>
<dbReference type="InterPro" id="IPR020930">
    <property type="entry name" value="Ribosomal_uL5_bac-type"/>
</dbReference>
<dbReference type="InterPro" id="IPR031309">
    <property type="entry name" value="Ribosomal_uL5_C"/>
</dbReference>
<dbReference type="InterPro" id="IPR020929">
    <property type="entry name" value="Ribosomal_uL5_CS"/>
</dbReference>
<dbReference type="InterPro" id="IPR022803">
    <property type="entry name" value="Ribosomal_uL5_dom_sf"/>
</dbReference>
<dbReference type="InterPro" id="IPR031310">
    <property type="entry name" value="Ribosomal_uL5_N"/>
</dbReference>
<dbReference type="NCBIfam" id="NF000585">
    <property type="entry name" value="PRK00010.1"/>
    <property type="match status" value="1"/>
</dbReference>
<dbReference type="PANTHER" id="PTHR11994">
    <property type="entry name" value="60S RIBOSOMAL PROTEIN L11-RELATED"/>
    <property type="match status" value="1"/>
</dbReference>
<dbReference type="Pfam" id="PF00281">
    <property type="entry name" value="Ribosomal_L5"/>
    <property type="match status" value="1"/>
</dbReference>
<dbReference type="Pfam" id="PF00673">
    <property type="entry name" value="Ribosomal_L5_C"/>
    <property type="match status" value="1"/>
</dbReference>
<dbReference type="PIRSF" id="PIRSF002161">
    <property type="entry name" value="Ribosomal_L5"/>
    <property type="match status" value="1"/>
</dbReference>
<dbReference type="SUPFAM" id="SSF55282">
    <property type="entry name" value="RL5-like"/>
    <property type="match status" value="1"/>
</dbReference>
<dbReference type="PROSITE" id="PS00358">
    <property type="entry name" value="RIBOSOMAL_L5"/>
    <property type="match status" value="1"/>
</dbReference>
<feature type="chain" id="PRO_1000166152" description="Large ribosomal subunit protein uL5">
    <location>
        <begin position="1"/>
        <end position="180"/>
    </location>
</feature>
<sequence>MANRLKEKYTNEVIPALSEKFNYTTVMAVPKVEKIVLNMGVGDAVSNAKNLEKAAAELELISGQKPLITKAKKSIAGFRLREGVAIGAKVTLRGERMYEFLDKLVTVSLPRVRDFHGVPTKSFDGRGNYTLGVKEQLIFPEINFDDVDKVRGLDIVIVTTANTDEESRELLKGLGMPFAK</sequence>
<gene>
    <name evidence="1" type="primary">rplE</name>
    <name type="ordered locus">SUB0080</name>
</gene>
<accession>B9DSW2</accession>
<evidence type="ECO:0000255" key="1">
    <source>
        <dbReference type="HAMAP-Rule" id="MF_01333"/>
    </source>
</evidence>
<evidence type="ECO:0000305" key="2"/>
<reference key="1">
    <citation type="journal article" date="2009" name="BMC Genomics">
        <title>Evidence for niche adaptation in the genome of the bovine pathogen Streptococcus uberis.</title>
        <authorList>
            <person name="Ward P.N."/>
            <person name="Holden M.T.G."/>
            <person name="Leigh J.A."/>
            <person name="Lennard N."/>
            <person name="Bignell A."/>
            <person name="Barron A."/>
            <person name="Clark L."/>
            <person name="Quail M.A."/>
            <person name="Woodward J."/>
            <person name="Barrell B.G."/>
            <person name="Egan S.A."/>
            <person name="Field T.R."/>
            <person name="Maskell D."/>
            <person name="Kehoe M."/>
            <person name="Dowson C.G."/>
            <person name="Chanter N."/>
            <person name="Whatmore A.M."/>
            <person name="Bentley S.D."/>
            <person name="Parkhill J."/>
        </authorList>
    </citation>
    <scope>NUCLEOTIDE SEQUENCE [LARGE SCALE GENOMIC DNA]</scope>
    <source>
        <strain>ATCC BAA-854 / 0140J</strain>
    </source>
</reference>
<keyword id="KW-1185">Reference proteome</keyword>
<keyword id="KW-0687">Ribonucleoprotein</keyword>
<keyword id="KW-0689">Ribosomal protein</keyword>
<keyword id="KW-0694">RNA-binding</keyword>
<keyword id="KW-0699">rRNA-binding</keyword>
<keyword id="KW-0820">tRNA-binding</keyword>
<protein>
    <recommendedName>
        <fullName evidence="1">Large ribosomal subunit protein uL5</fullName>
    </recommendedName>
    <alternativeName>
        <fullName evidence="2">50S ribosomal protein L5</fullName>
    </alternativeName>
</protein>
<organism>
    <name type="scientific">Streptococcus uberis (strain ATCC BAA-854 / 0140J)</name>
    <dbReference type="NCBI Taxonomy" id="218495"/>
    <lineage>
        <taxon>Bacteria</taxon>
        <taxon>Bacillati</taxon>
        <taxon>Bacillota</taxon>
        <taxon>Bacilli</taxon>
        <taxon>Lactobacillales</taxon>
        <taxon>Streptococcaceae</taxon>
        <taxon>Streptococcus</taxon>
    </lineage>
</organism>
<comment type="function">
    <text evidence="1">This is one of the proteins that bind and probably mediate the attachment of the 5S RNA into the large ribosomal subunit, where it forms part of the central protuberance. In the 70S ribosome it contacts protein S13 of the 30S subunit (bridge B1b), connecting the 2 subunits; this bridge is implicated in subunit movement. Contacts the P site tRNA; the 5S rRNA and some of its associated proteins might help stabilize positioning of ribosome-bound tRNAs.</text>
</comment>
<comment type="subunit">
    <text evidence="1">Part of the 50S ribosomal subunit; part of the 5S rRNA/L5/L18/L25 subcomplex. Contacts the 5S rRNA and the P site tRNA. Forms a bridge to the 30S subunit in the 70S ribosome.</text>
</comment>
<comment type="similarity">
    <text evidence="1">Belongs to the universal ribosomal protein uL5 family.</text>
</comment>